<protein>
    <recommendedName>
        <fullName evidence="1">Non-structural protein 1</fullName>
        <shortName evidence="1">NS1</shortName>
    </recommendedName>
    <alternativeName>
        <fullName evidence="1">NS1A</fullName>
    </alternativeName>
</protein>
<organismHost>
    <name type="scientific">Aves</name>
    <dbReference type="NCBI Taxonomy" id="8782"/>
</organismHost>
<organismHost>
    <name type="scientific">Cetacea</name>
    <name type="common">whales</name>
    <dbReference type="NCBI Taxonomy" id="9721"/>
</organismHost>
<organismHost>
    <name type="scientific">Homo sapiens</name>
    <name type="common">Human</name>
    <dbReference type="NCBI Taxonomy" id="9606"/>
</organismHost>
<organismHost>
    <name type="scientific">Phocidae</name>
    <name type="common">true seals</name>
    <dbReference type="NCBI Taxonomy" id="9709"/>
</organismHost>
<organismHost>
    <name type="scientific">Sus scrofa</name>
    <name type="common">Pig</name>
    <dbReference type="NCBI Taxonomy" id="9823"/>
</organismHost>
<reference key="1">
    <citation type="submission" date="2005-12" db="EMBL/GenBank/DDBJ databases">
        <title>The NIAID influenza genome sequencing project.</title>
        <authorList>
            <person name="Ghedin E."/>
            <person name="Spiro D."/>
            <person name="Miller N."/>
            <person name="Zaborsky J."/>
            <person name="Feldblyum T."/>
            <person name="Subbu V."/>
            <person name="Shumway M."/>
            <person name="Sparenborg J."/>
            <person name="Groveman L."/>
            <person name="Halpin R."/>
            <person name="Sitz J."/>
            <person name="Koo H."/>
            <person name="Salzberg S.L."/>
            <person name="Webster R.G."/>
            <person name="Hoffmann E."/>
            <person name="Krauss S."/>
            <person name="Naeve C."/>
            <person name="Bao Y."/>
            <person name="Bolotov P."/>
            <person name="Dernovoy D."/>
            <person name="Kiryutin B."/>
            <person name="Lipman D.J."/>
            <person name="Tatusova T."/>
        </authorList>
    </citation>
    <scope>NUCLEOTIDE SEQUENCE [GENOMIC RNA]</scope>
</reference>
<evidence type="ECO:0000255" key="1">
    <source>
        <dbReference type="HAMAP-Rule" id="MF_04066"/>
    </source>
</evidence>
<evidence type="ECO:0000256" key="2">
    <source>
        <dbReference type="SAM" id="MobiDB-lite"/>
    </source>
</evidence>
<comment type="function">
    <text evidence="1">Inhibits post-transcriptional processing of cellular pre-mRNA, by binding and inhibiting two cellular proteins that are required for the 3'-end processing of cellular pre-mRNAs: the 30 kDa cleavage and polyadenylation specificity factor/CPSF4 and the poly(A)-binding protein 2/PABPN1. In turn, unprocessed 3' end pre-mRNAs accumulate in the host nucleus and are no longer exported to the cytoplasm. Cellular protein synthesis is thereby shut off very early after virus infection. Viral protein synthesis is not affected by the inhibition of the cellular 3' end processing machinery because the poly(A) tails of viral mRNAs are produced by the viral polymerase through a stuttering mechanism. Prevents the establishment of the cellular antiviral state by inhibiting TRIM25-mediated RIGI ubiquitination, which normally triggers the antiviral transduction signal that leads to the activation of type I IFN genes by transcription factors IRF3 and IRF7. Also binds poly(A) and U6 snRNA. Inhibits the integrated stress response (ISR) in the infected cell by blocking dsRNA binding by EIF2AK2/PKR and further phosphorylation of EIF2S1/EIF-2ALPHA. Stress granule formation is thus inhibited, which allows protein synthesis and viral replication.</text>
</comment>
<comment type="subunit">
    <text evidence="1">Homodimer. Interacts with host TRIM25 (via coiled coil); this interaction specifically inhibits TRIM25 multimerization and TRIM25-mediated RIGI CARD ubiquitination. Interacts with human EIF2AK2/PKR, CPSF4, IVNS1ABP and PABPN1.</text>
</comment>
<comment type="subcellular location">
    <subcellularLocation>
        <location evidence="1">Host nucleus</location>
    </subcellularLocation>
    <subcellularLocation>
        <location evidence="1">Host cytoplasm</location>
    </subcellularLocation>
    <text evidence="1">In uninfected, transfected cells, NS1 is localized in the nucleus. Only in virus infected cells, the nuclear export signal is unveiled, presumably by a viral protein, and a fraction of NS1 is exported in the cytoplasm.</text>
</comment>
<comment type="alternative products">
    <event type="alternative splicing"/>
    <isoform>
        <id>Q2RCH0-1</id>
        <name>NS1</name>
        <sequence type="displayed"/>
    </isoform>
    <isoform>
        <id>Q2RCH1-1</id>
        <name>NEP</name>
        <name>NS2</name>
        <sequence type="external"/>
    </isoform>
</comment>
<comment type="domain">
    <text evidence="1">The dsRNA-binding region is required for suppression of RNA silencing.</text>
</comment>
<comment type="PTM">
    <text evidence="1">Upon interferon induction, ISGylated via host HERC5; this results in the impairment of NS1 interaction with RNA targets due to its inability to form homodimers and to interact with host EIF2AK2/PKR.</text>
</comment>
<comment type="similarity">
    <text evidence="1">Belongs to the influenza A viruses NS1 family.</text>
</comment>
<dbReference type="EMBL" id="CY007623">
    <property type="protein sequence ID" value="ABC46570.1"/>
    <property type="molecule type" value="Genomic_RNA"/>
</dbReference>
<dbReference type="SMR" id="Q2RCH0"/>
<dbReference type="Proteomes" id="UP000008577">
    <property type="component" value="Genome"/>
</dbReference>
<dbReference type="GO" id="GO:0030430">
    <property type="term" value="C:host cell cytoplasm"/>
    <property type="evidence" value="ECO:0007669"/>
    <property type="project" value="UniProtKB-SubCell"/>
</dbReference>
<dbReference type="GO" id="GO:0042025">
    <property type="term" value="C:host cell nucleus"/>
    <property type="evidence" value="ECO:0007669"/>
    <property type="project" value="UniProtKB-SubCell"/>
</dbReference>
<dbReference type="GO" id="GO:0030291">
    <property type="term" value="F:protein serine/threonine kinase inhibitor activity"/>
    <property type="evidence" value="ECO:0007669"/>
    <property type="project" value="UniProtKB-KW"/>
</dbReference>
<dbReference type="GO" id="GO:0003723">
    <property type="term" value="F:RNA binding"/>
    <property type="evidence" value="ECO:0007669"/>
    <property type="project" value="UniProtKB-KW"/>
</dbReference>
<dbReference type="GO" id="GO:0039540">
    <property type="term" value="P:symbiont-mediated suppression of host cytoplasmic pattern recognition receptor signaling pathway via inhibition of RIG-I activity"/>
    <property type="evidence" value="ECO:0007669"/>
    <property type="project" value="UniProtKB-KW"/>
</dbReference>
<dbReference type="GO" id="GO:0039657">
    <property type="term" value="P:symbiont-mediated suppression of host gene expression"/>
    <property type="evidence" value="ECO:0007669"/>
    <property type="project" value="UniProtKB-KW"/>
</dbReference>
<dbReference type="GO" id="GO:0039524">
    <property type="term" value="P:symbiont-mediated suppression of host mRNA processing"/>
    <property type="evidence" value="ECO:0007669"/>
    <property type="project" value="UniProtKB-KW"/>
</dbReference>
<dbReference type="GO" id="GO:0039580">
    <property type="term" value="P:symbiont-mediated suppression of host PKR/eIFalpha signaling"/>
    <property type="evidence" value="ECO:0007669"/>
    <property type="project" value="UniProtKB-KW"/>
</dbReference>
<dbReference type="GO" id="GO:0039502">
    <property type="term" value="P:symbiont-mediated suppression of host type I interferon-mediated signaling pathway"/>
    <property type="evidence" value="ECO:0007669"/>
    <property type="project" value="UniProtKB-KW"/>
</dbReference>
<dbReference type="FunFam" id="1.10.287.10:FF:000001">
    <property type="entry name" value="Non-structural protein 1"/>
    <property type="match status" value="1"/>
</dbReference>
<dbReference type="FunFam" id="3.30.420.330:FF:000001">
    <property type="entry name" value="Non-structural protein 1"/>
    <property type="match status" value="1"/>
</dbReference>
<dbReference type="Gene3D" id="3.30.420.330">
    <property type="entry name" value="Influenza virus non-structural protein, effector domain"/>
    <property type="match status" value="1"/>
</dbReference>
<dbReference type="Gene3D" id="1.10.287.10">
    <property type="entry name" value="S15/NS1, RNA-binding"/>
    <property type="match status" value="1"/>
</dbReference>
<dbReference type="HAMAP" id="MF_04066">
    <property type="entry name" value="INFV_NS1"/>
    <property type="match status" value="1"/>
</dbReference>
<dbReference type="InterPro" id="IPR004208">
    <property type="entry name" value="NS1"/>
</dbReference>
<dbReference type="InterPro" id="IPR000256">
    <property type="entry name" value="NS1A"/>
</dbReference>
<dbReference type="InterPro" id="IPR038064">
    <property type="entry name" value="NS1A_effect_dom-like_sf"/>
</dbReference>
<dbReference type="InterPro" id="IPR009068">
    <property type="entry name" value="uS15_NS1_RNA-bd_sf"/>
</dbReference>
<dbReference type="Pfam" id="PF00600">
    <property type="entry name" value="Flu_NS1"/>
    <property type="match status" value="1"/>
</dbReference>
<dbReference type="SUPFAM" id="SSF143021">
    <property type="entry name" value="Ns1 effector domain-like"/>
    <property type="match status" value="1"/>
</dbReference>
<dbReference type="SUPFAM" id="SSF47060">
    <property type="entry name" value="S15/NS1 RNA-binding domain"/>
    <property type="match status" value="1"/>
</dbReference>
<sequence>MDSNTVSSFQVDCFLWHVRKQVVDQELGDAPFLDRLRRDQRSLRGRGSTLGLDIKAATHVGKQIVEKILKEESDEALKMTMASTPASRYITDMTIEELSRNWFMLMPKQKVEGPLCIRMDQAIMEKNIMLKANFSVIFDRLETLVLLRAFTEEGAIVGEISPLPSFPGHTIEDVKNAIGVLIGGLEWNDNTVRVSKTLQRFAWGSSNENGGPPLTPKQKRKMARTARSKVRRDKMAD</sequence>
<feature type="chain" id="PRO_0000324267" description="Non-structural protein 1">
    <location>
        <begin position="1"/>
        <end position="237"/>
    </location>
</feature>
<feature type="region of interest" description="RNA-binding and homodimerization" evidence="1">
    <location>
        <begin position="1"/>
        <end position="73"/>
    </location>
</feature>
<feature type="region of interest" description="CPSF4-binding" evidence="1">
    <location>
        <begin position="180"/>
        <end position="215"/>
    </location>
</feature>
<feature type="region of interest" description="Disordered" evidence="2">
    <location>
        <begin position="205"/>
        <end position="237"/>
    </location>
</feature>
<feature type="region of interest" description="PABPN1-binding" evidence="1">
    <location>
        <begin position="223"/>
        <end position="230"/>
    </location>
</feature>
<feature type="short sequence motif" description="Nuclear localization signal" evidence="1">
    <location>
        <begin position="34"/>
        <end position="38"/>
    </location>
</feature>
<feature type="short sequence motif" description="Nuclear export signal" evidence="1">
    <location>
        <begin position="137"/>
        <end position="146"/>
    </location>
</feature>
<feature type="compositionally biased region" description="Basic residues" evidence="2">
    <location>
        <begin position="217"/>
        <end position="237"/>
    </location>
</feature>
<accession>Q2RCH0</accession>
<proteinExistence type="inferred from homology"/>
<name>NS1_I80A4</name>
<organism>
    <name type="scientific">Influenza A virus (strain A/Memphis/4/1980 H3N2)</name>
    <dbReference type="NCBI Taxonomy" id="383578"/>
    <lineage>
        <taxon>Viruses</taxon>
        <taxon>Riboviria</taxon>
        <taxon>Orthornavirae</taxon>
        <taxon>Negarnaviricota</taxon>
        <taxon>Polyploviricotina</taxon>
        <taxon>Insthoviricetes</taxon>
        <taxon>Articulavirales</taxon>
        <taxon>Orthomyxoviridae</taxon>
        <taxon>Alphainfluenzavirus</taxon>
        <taxon>Alphainfluenzavirus influenzae</taxon>
        <taxon>Influenza A virus</taxon>
    </lineage>
</organism>
<keyword id="KW-0025">Alternative splicing</keyword>
<keyword id="KW-1262">Eukaryotic host gene expression shutoff by virus</keyword>
<keyword id="KW-1035">Host cytoplasm</keyword>
<keyword id="KW-1190">Host gene expression shutoff by virus</keyword>
<keyword id="KW-1192">Host mRNA suppression by virus</keyword>
<keyword id="KW-1048">Host nucleus</keyword>
<keyword id="KW-0945">Host-virus interaction</keyword>
<keyword id="KW-1090">Inhibition of host innate immune response by virus</keyword>
<keyword id="KW-1114">Inhibition of host interferon signaling pathway by virus</keyword>
<keyword id="KW-1102">Inhibition of host PKR by virus</keyword>
<keyword id="KW-1103">Inhibition of host pre-mRNA processing by virus</keyword>
<keyword id="KW-1088">Inhibition of host RIG-I by virus</keyword>
<keyword id="KW-1113">Inhibition of host RLR pathway by virus</keyword>
<keyword id="KW-0922">Interferon antiviral system evasion</keyword>
<keyword id="KW-0694">RNA-binding</keyword>
<keyword id="KW-0832">Ubl conjugation</keyword>
<keyword id="KW-0899">Viral immunoevasion</keyword>
<gene>
    <name evidence="1" type="primary">NS</name>
</gene>